<feature type="chain" id="PRO_1000206172" description="Aspartate 1-decarboxylase beta chain" evidence="1">
    <location>
        <begin position="1"/>
        <end position="24"/>
    </location>
</feature>
<feature type="chain" id="PRO_1000206173" description="Aspartate 1-decarboxylase alpha chain" evidence="1">
    <location>
        <begin position="25"/>
        <end position="126"/>
    </location>
</feature>
<feature type="active site" description="Schiff-base intermediate with substrate; via pyruvic acid" evidence="1">
    <location>
        <position position="25"/>
    </location>
</feature>
<feature type="active site" description="Proton donor" evidence="1">
    <location>
        <position position="58"/>
    </location>
</feature>
<feature type="binding site" evidence="1">
    <location>
        <position position="57"/>
    </location>
    <ligand>
        <name>substrate</name>
    </ligand>
</feature>
<feature type="binding site" evidence="1">
    <location>
        <begin position="73"/>
        <end position="75"/>
    </location>
    <ligand>
        <name>substrate</name>
    </ligand>
</feature>
<feature type="modified residue" description="Pyruvic acid (Ser)" evidence="1">
    <location>
        <position position="25"/>
    </location>
</feature>
<comment type="function">
    <text evidence="1">Catalyzes the pyruvoyl-dependent decarboxylation of aspartate to produce beta-alanine.</text>
</comment>
<comment type="catalytic activity">
    <reaction evidence="1">
        <text>L-aspartate + H(+) = beta-alanine + CO2</text>
        <dbReference type="Rhea" id="RHEA:19497"/>
        <dbReference type="ChEBI" id="CHEBI:15378"/>
        <dbReference type="ChEBI" id="CHEBI:16526"/>
        <dbReference type="ChEBI" id="CHEBI:29991"/>
        <dbReference type="ChEBI" id="CHEBI:57966"/>
        <dbReference type="EC" id="4.1.1.11"/>
    </reaction>
</comment>
<comment type="cofactor">
    <cofactor evidence="1">
        <name>pyruvate</name>
        <dbReference type="ChEBI" id="CHEBI:15361"/>
    </cofactor>
    <text evidence="1">Binds 1 pyruvoyl group covalently per subunit.</text>
</comment>
<comment type="pathway">
    <text evidence="1">Cofactor biosynthesis; (R)-pantothenate biosynthesis; beta-alanine from L-aspartate: step 1/1.</text>
</comment>
<comment type="subunit">
    <text evidence="1">Heterooctamer of four alpha and four beta subunits.</text>
</comment>
<comment type="subcellular location">
    <subcellularLocation>
        <location evidence="1">Cytoplasm</location>
    </subcellularLocation>
</comment>
<comment type="PTM">
    <text evidence="1">Is synthesized initially as an inactive proenzyme, which is activated by self-cleavage at a specific serine bond to produce a beta-subunit with a hydroxyl group at its C-terminus and an alpha-subunit with a pyruvoyl group at its N-terminus.</text>
</comment>
<comment type="similarity">
    <text evidence="1">Belongs to the PanD family.</text>
</comment>
<keyword id="KW-0068">Autocatalytic cleavage</keyword>
<keyword id="KW-0963">Cytoplasm</keyword>
<keyword id="KW-0210">Decarboxylase</keyword>
<keyword id="KW-0456">Lyase</keyword>
<keyword id="KW-0566">Pantothenate biosynthesis</keyword>
<keyword id="KW-0670">Pyruvate</keyword>
<keyword id="KW-0704">Schiff base</keyword>
<keyword id="KW-0865">Zymogen</keyword>
<evidence type="ECO:0000255" key="1">
    <source>
        <dbReference type="HAMAP-Rule" id="MF_00446"/>
    </source>
</evidence>
<proteinExistence type="inferred from homology"/>
<name>PAND_ECOBW</name>
<sequence length="126" mass="13834">MIRTMLQGKLHRVKVTHADLHYEGSCAIDQDFLDAAGILENEAIDIWNVTNGKRFSTYAIAAERGSRIISVNGAAAHCASVGDIVIIASFVTMPDEEARTWRPNVAYFEGDNEMKRTAKAIPVQVA</sequence>
<protein>
    <recommendedName>
        <fullName evidence="1">Aspartate 1-decarboxylase</fullName>
        <ecNumber evidence="1">4.1.1.11</ecNumber>
    </recommendedName>
    <alternativeName>
        <fullName evidence="1">Aspartate alpha-decarboxylase</fullName>
    </alternativeName>
    <component>
        <recommendedName>
            <fullName evidence="1">Aspartate 1-decarboxylase beta chain</fullName>
        </recommendedName>
    </component>
    <component>
        <recommendedName>
            <fullName evidence="1">Aspartate 1-decarboxylase alpha chain</fullName>
        </recommendedName>
    </component>
</protein>
<reference key="1">
    <citation type="journal article" date="2009" name="J. Bacteriol.">
        <title>Genomic sequencing reveals regulatory mutations and recombinational events in the widely used MC4100 lineage of Escherichia coli K-12.</title>
        <authorList>
            <person name="Ferenci T."/>
            <person name="Zhou Z."/>
            <person name="Betteridge T."/>
            <person name="Ren Y."/>
            <person name="Liu Y."/>
            <person name="Feng L."/>
            <person name="Reeves P.R."/>
            <person name="Wang L."/>
        </authorList>
    </citation>
    <scope>NUCLEOTIDE SEQUENCE [LARGE SCALE GENOMIC DNA]</scope>
    <source>
        <strain>K12 / MC4100 / BW2952</strain>
    </source>
</reference>
<dbReference type="EC" id="4.1.1.11" evidence="1"/>
<dbReference type="EMBL" id="CP001396">
    <property type="protein sequence ID" value="ACR62019.1"/>
    <property type="molecule type" value="Genomic_DNA"/>
</dbReference>
<dbReference type="RefSeq" id="WP_000621515.1">
    <property type="nucleotide sequence ID" value="NC_012759.1"/>
</dbReference>
<dbReference type="SMR" id="C4ZRM4"/>
<dbReference type="GeneID" id="93777305"/>
<dbReference type="KEGG" id="ebw:BWG_0124"/>
<dbReference type="HOGENOM" id="CLU_115305_2_1_6"/>
<dbReference type="UniPathway" id="UPA00028">
    <property type="reaction ID" value="UER00002"/>
</dbReference>
<dbReference type="GO" id="GO:0005829">
    <property type="term" value="C:cytosol"/>
    <property type="evidence" value="ECO:0007669"/>
    <property type="project" value="TreeGrafter"/>
</dbReference>
<dbReference type="GO" id="GO:0004068">
    <property type="term" value="F:aspartate 1-decarboxylase activity"/>
    <property type="evidence" value="ECO:0007669"/>
    <property type="project" value="UniProtKB-UniRule"/>
</dbReference>
<dbReference type="GO" id="GO:0006523">
    <property type="term" value="P:alanine biosynthetic process"/>
    <property type="evidence" value="ECO:0007669"/>
    <property type="project" value="InterPro"/>
</dbReference>
<dbReference type="GO" id="GO:0015940">
    <property type="term" value="P:pantothenate biosynthetic process"/>
    <property type="evidence" value="ECO:0007669"/>
    <property type="project" value="UniProtKB-UniRule"/>
</dbReference>
<dbReference type="CDD" id="cd06919">
    <property type="entry name" value="Asp_decarbox"/>
    <property type="match status" value="1"/>
</dbReference>
<dbReference type="FunFam" id="2.40.40.20:FF:000004">
    <property type="entry name" value="Aspartate 1-decarboxylase"/>
    <property type="match status" value="1"/>
</dbReference>
<dbReference type="Gene3D" id="2.40.40.20">
    <property type="match status" value="1"/>
</dbReference>
<dbReference type="HAMAP" id="MF_00446">
    <property type="entry name" value="PanD"/>
    <property type="match status" value="1"/>
</dbReference>
<dbReference type="InterPro" id="IPR009010">
    <property type="entry name" value="Asp_de-COase-like_dom_sf"/>
</dbReference>
<dbReference type="InterPro" id="IPR003190">
    <property type="entry name" value="Asp_decarbox"/>
</dbReference>
<dbReference type="NCBIfam" id="TIGR00223">
    <property type="entry name" value="panD"/>
    <property type="match status" value="1"/>
</dbReference>
<dbReference type="PANTHER" id="PTHR21012">
    <property type="entry name" value="ASPARTATE 1-DECARBOXYLASE"/>
    <property type="match status" value="1"/>
</dbReference>
<dbReference type="PANTHER" id="PTHR21012:SF0">
    <property type="entry name" value="ASPARTATE 1-DECARBOXYLASE"/>
    <property type="match status" value="1"/>
</dbReference>
<dbReference type="Pfam" id="PF02261">
    <property type="entry name" value="Asp_decarbox"/>
    <property type="match status" value="1"/>
</dbReference>
<dbReference type="PIRSF" id="PIRSF006246">
    <property type="entry name" value="Asp_decarbox"/>
    <property type="match status" value="1"/>
</dbReference>
<dbReference type="SUPFAM" id="SSF50692">
    <property type="entry name" value="ADC-like"/>
    <property type="match status" value="1"/>
</dbReference>
<accession>C4ZRM4</accession>
<organism>
    <name type="scientific">Escherichia coli (strain K12 / MC4100 / BW2952)</name>
    <dbReference type="NCBI Taxonomy" id="595496"/>
    <lineage>
        <taxon>Bacteria</taxon>
        <taxon>Pseudomonadati</taxon>
        <taxon>Pseudomonadota</taxon>
        <taxon>Gammaproteobacteria</taxon>
        <taxon>Enterobacterales</taxon>
        <taxon>Enterobacteriaceae</taxon>
        <taxon>Escherichia</taxon>
    </lineage>
</organism>
<gene>
    <name evidence="1" type="primary">panD</name>
    <name type="ordered locus">BWG_0124</name>
</gene>